<protein>
    <recommendedName>
        <fullName evidence="1">DNA ligase B</fullName>
        <ecNumber evidence="1">6.5.1.2</ecNumber>
    </recommendedName>
    <alternativeName>
        <fullName evidence="1">Polydeoxyribonucleotide synthase [NAD(+)] B</fullName>
    </alternativeName>
</protein>
<sequence length="567" mass="63612">MNILNLKIIMFLLISNTIVVGGAWATSTCPDWPATRIAVEINALEQQLNKWSAAYHQQGHSPVTDDIYDQLQDKLRVWQSCRGLPDKTESQPIPGKGQFLHPVAHTGLKKLKDETALTRWMAGRKNLWVQPKVDGVAVTLVYHGGKLVQLLSRGNGVKGQNWTEKAPFISAIPQYIANAPALLTLQGELFLLMDGHQQAKSGGVNARSTVAGALMRKSPSPLLAQVGVFIWAWPDGPTTMKEKVALLQVMGFPFTAKYSEPVMSHLDVVQWRQFWFQAPLPFVTDGVVVRQEEEPAGRYWQATPGQWSMAWKYPPLQHIAEVKDIHFTLGRTGKGTVVLEVLPIKIDDKWIRRVNIGSVTRWKQWDIAPGDHITLALAGHGIPRLDNVVWRVHQRNTITAPNWDKFHQLSCFQRLPHGCEPQFLSRLIWLSGPGGLDIGGIGGGFWQELIHHELINDLVGWLLLTPEQIASIPGIGNARAEKIYQQFQRAKQQPFSRWLLALGFPQVVSVDAQWQVVLRRSLSEWATMAGIGQMRAKQIKHFLDHPDVQALADFLSTQKVVGFELTE</sequence>
<dbReference type="EC" id="6.5.1.2" evidence="1"/>
<dbReference type="EMBL" id="CP000668">
    <property type="protein sequence ID" value="ABP42207.1"/>
    <property type="molecule type" value="Genomic_DNA"/>
</dbReference>
<dbReference type="RefSeq" id="WP_002215674.1">
    <property type="nucleotide sequence ID" value="NZ_CP009715.1"/>
</dbReference>
<dbReference type="SMR" id="A4TSE5"/>
<dbReference type="GeneID" id="57974549"/>
<dbReference type="KEGG" id="ypp:YPDSF_3864"/>
<dbReference type="PATRIC" id="fig|386656.14.peg.654"/>
<dbReference type="GO" id="GO:0003911">
    <property type="term" value="F:DNA ligase (NAD+) activity"/>
    <property type="evidence" value="ECO:0007669"/>
    <property type="project" value="UniProtKB-UniRule"/>
</dbReference>
<dbReference type="GO" id="GO:0006281">
    <property type="term" value="P:DNA repair"/>
    <property type="evidence" value="ECO:0007669"/>
    <property type="project" value="UniProtKB-KW"/>
</dbReference>
<dbReference type="GO" id="GO:0006260">
    <property type="term" value="P:DNA replication"/>
    <property type="evidence" value="ECO:0007669"/>
    <property type="project" value="UniProtKB-KW"/>
</dbReference>
<dbReference type="CDD" id="cd00114">
    <property type="entry name" value="LIGANc"/>
    <property type="match status" value="1"/>
</dbReference>
<dbReference type="FunFam" id="2.40.50.140:FF:000139">
    <property type="entry name" value="DNA ligase B"/>
    <property type="match status" value="1"/>
</dbReference>
<dbReference type="FunFam" id="3.30.470.30:FF:000007">
    <property type="entry name" value="DNA ligase B"/>
    <property type="match status" value="1"/>
</dbReference>
<dbReference type="Gene3D" id="1.10.150.20">
    <property type="entry name" value="5' to 3' exonuclease, C-terminal subdomain"/>
    <property type="match status" value="1"/>
</dbReference>
<dbReference type="Gene3D" id="3.30.470.30">
    <property type="entry name" value="DNA ligase/mRNA capping enzyme"/>
    <property type="match status" value="1"/>
</dbReference>
<dbReference type="Gene3D" id="1.10.287.610">
    <property type="entry name" value="Helix hairpin bin"/>
    <property type="match status" value="1"/>
</dbReference>
<dbReference type="Gene3D" id="2.40.50.140">
    <property type="entry name" value="Nucleic acid-binding proteins"/>
    <property type="match status" value="1"/>
</dbReference>
<dbReference type="HAMAP" id="MF_01587">
    <property type="entry name" value="DNA_ligase_B"/>
    <property type="match status" value="1"/>
</dbReference>
<dbReference type="InterPro" id="IPR020923">
    <property type="entry name" value="DNA_ligase_B"/>
</dbReference>
<dbReference type="InterPro" id="IPR013839">
    <property type="entry name" value="DNAligase_adenylation"/>
</dbReference>
<dbReference type="InterPro" id="IPR013840">
    <property type="entry name" value="DNAligase_N"/>
</dbReference>
<dbReference type="InterPro" id="IPR012340">
    <property type="entry name" value="NA-bd_OB-fold"/>
</dbReference>
<dbReference type="InterPro" id="IPR050326">
    <property type="entry name" value="NAD_dep_DNA_ligaseB"/>
</dbReference>
<dbReference type="InterPro" id="IPR004150">
    <property type="entry name" value="NAD_DNA_ligase_OB"/>
</dbReference>
<dbReference type="InterPro" id="IPR010994">
    <property type="entry name" value="RuvA_2-like"/>
</dbReference>
<dbReference type="NCBIfam" id="NF005987">
    <property type="entry name" value="PRK08097.1"/>
    <property type="match status" value="1"/>
</dbReference>
<dbReference type="PANTHER" id="PTHR47810">
    <property type="entry name" value="DNA LIGASE"/>
    <property type="match status" value="1"/>
</dbReference>
<dbReference type="PANTHER" id="PTHR47810:SF1">
    <property type="entry name" value="DNA LIGASE B"/>
    <property type="match status" value="1"/>
</dbReference>
<dbReference type="Pfam" id="PF01653">
    <property type="entry name" value="DNA_ligase_aden"/>
    <property type="match status" value="1"/>
</dbReference>
<dbReference type="Pfam" id="PF03120">
    <property type="entry name" value="DNA_ligase_OB"/>
    <property type="match status" value="1"/>
</dbReference>
<dbReference type="SMART" id="SM00532">
    <property type="entry name" value="LIGANc"/>
    <property type="match status" value="1"/>
</dbReference>
<dbReference type="SUPFAM" id="SSF56091">
    <property type="entry name" value="DNA ligase/mRNA capping enzyme, catalytic domain"/>
    <property type="match status" value="1"/>
</dbReference>
<dbReference type="SUPFAM" id="SSF50249">
    <property type="entry name" value="Nucleic acid-binding proteins"/>
    <property type="match status" value="1"/>
</dbReference>
<dbReference type="SUPFAM" id="SSF47781">
    <property type="entry name" value="RuvA domain 2-like"/>
    <property type="match status" value="1"/>
</dbReference>
<accession>A4TSE5</accession>
<evidence type="ECO:0000255" key="1">
    <source>
        <dbReference type="HAMAP-Rule" id="MF_01587"/>
    </source>
</evidence>
<name>LIGB_YERPP</name>
<feature type="chain" id="PRO_0000313561" description="DNA ligase B">
    <location>
        <begin position="1"/>
        <end position="567"/>
    </location>
</feature>
<feature type="active site" description="N6-AMP-lysine intermediate" evidence="1">
    <location>
        <position position="132"/>
    </location>
</feature>
<organism>
    <name type="scientific">Yersinia pestis (strain Pestoides F)</name>
    <dbReference type="NCBI Taxonomy" id="386656"/>
    <lineage>
        <taxon>Bacteria</taxon>
        <taxon>Pseudomonadati</taxon>
        <taxon>Pseudomonadota</taxon>
        <taxon>Gammaproteobacteria</taxon>
        <taxon>Enterobacterales</taxon>
        <taxon>Yersiniaceae</taxon>
        <taxon>Yersinia</taxon>
    </lineage>
</organism>
<comment type="function">
    <text evidence="1">Catalyzes the formation of phosphodiester linkages between 5'-phosphoryl and 3'-hydroxyl groups in double-stranded DNA using NAD as a coenzyme and as the energy source for the reaction.</text>
</comment>
<comment type="catalytic activity">
    <reaction evidence="1">
        <text>NAD(+) + (deoxyribonucleotide)n-3'-hydroxyl + 5'-phospho-(deoxyribonucleotide)m = (deoxyribonucleotide)n+m + AMP + beta-nicotinamide D-nucleotide.</text>
        <dbReference type="EC" id="6.5.1.2"/>
    </reaction>
</comment>
<comment type="similarity">
    <text evidence="1">Belongs to the NAD-dependent DNA ligase family. LigB subfamily.</text>
</comment>
<gene>
    <name evidence="1" type="primary">ligB</name>
    <name type="ordered locus">YPDSF_3864</name>
</gene>
<keyword id="KW-0227">DNA damage</keyword>
<keyword id="KW-0234">DNA repair</keyword>
<keyword id="KW-0235">DNA replication</keyword>
<keyword id="KW-0436">Ligase</keyword>
<keyword id="KW-0520">NAD</keyword>
<proteinExistence type="inferred from homology"/>
<reference key="1">
    <citation type="submission" date="2007-02" db="EMBL/GenBank/DDBJ databases">
        <title>Complete sequence of chromosome of Yersinia pestis Pestoides F.</title>
        <authorList>
            <consortium name="US DOE Joint Genome Institute"/>
            <person name="Copeland A."/>
            <person name="Lucas S."/>
            <person name="Lapidus A."/>
            <person name="Barry K."/>
            <person name="Detter J.C."/>
            <person name="Glavina del Rio T."/>
            <person name="Hammon N."/>
            <person name="Israni S."/>
            <person name="Dalin E."/>
            <person name="Tice H."/>
            <person name="Pitluck S."/>
            <person name="Di Bartolo G."/>
            <person name="Chain P."/>
            <person name="Malfatti S."/>
            <person name="Shin M."/>
            <person name="Vergez L."/>
            <person name="Schmutz J."/>
            <person name="Larimer F."/>
            <person name="Land M."/>
            <person name="Hauser L."/>
            <person name="Worsham P."/>
            <person name="Chu M."/>
            <person name="Bearden S."/>
            <person name="Garcia E."/>
            <person name="Richardson P."/>
        </authorList>
    </citation>
    <scope>NUCLEOTIDE SEQUENCE [LARGE SCALE GENOMIC DNA]</scope>
    <source>
        <strain>Pestoides F</strain>
    </source>
</reference>